<gene>
    <name evidence="1" type="primary">eutC</name>
    <name type="ordered locus">EFER_0730</name>
</gene>
<sequence length="295" mass="31716">MDQKQIEEIVRSVMASMGQAAPAPSEAKCATTTCAAPVTSESCALDLGSAEAKAWIGVENPHRADVLTELRRSTVARVCTGRAGPRPRTQALLRFLADHSRSKDTVLKEVPEEWVKAQGLLEVRSEISDKNLYLTRPDMGRRLCAEAVEALKAQCVANPDVQVVISDGLSTDAITVNYEEILPPLMAGLKQAGLKVGTPFFVRYGRVKIEDQIGELLGAKVVILLVGERPGLGQSESLSCYAVYSPCMATTVEADRTCISNIHQGGTPPVEAAAVIVDLAKRMLEQKASGINMTR</sequence>
<accession>B7LKJ3</accession>
<organism>
    <name type="scientific">Escherichia fergusonii (strain ATCC 35469 / DSM 13698 / CCUG 18766 / IAM 14443 / JCM 21226 / LMG 7866 / NBRC 102419 / NCTC 12128 / CDC 0568-73)</name>
    <dbReference type="NCBI Taxonomy" id="585054"/>
    <lineage>
        <taxon>Bacteria</taxon>
        <taxon>Pseudomonadati</taxon>
        <taxon>Pseudomonadota</taxon>
        <taxon>Gammaproteobacteria</taxon>
        <taxon>Enterobacterales</taxon>
        <taxon>Enterobacteriaceae</taxon>
        <taxon>Escherichia</taxon>
    </lineage>
</organism>
<feature type="chain" id="PRO_1000130093" description="Ethanolamine ammonia-lyase small subunit">
    <location>
        <begin position="1"/>
        <end position="295"/>
    </location>
</feature>
<feature type="binding site" evidence="1">
    <location>
        <position position="207"/>
    </location>
    <ligand>
        <name>adenosylcob(III)alamin</name>
        <dbReference type="ChEBI" id="CHEBI:18408"/>
    </ligand>
</feature>
<feature type="binding site" evidence="1">
    <location>
        <position position="228"/>
    </location>
    <ligand>
        <name>adenosylcob(III)alamin</name>
        <dbReference type="ChEBI" id="CHEBI:18408"/>
    </ligand>
</feature>
<feature type="binding site" evidence="1">
    <location>
        <position position="258"/>
    </location>
    <ligand>
        <name>adenosylcob(III)alamin</name>
        <dbReference type="ChEBI" id="CHEBI:18408"/>
    </ligand>
</feature>
<reference key="1">
    <citation type="journal article" date="2009" name="PLoS Genet.">
        <title>Organised genome dynamics in the Escherichia coli species results in highly diverse adaptive paths.</title>
        <authorList>
            <person name="Touchon M."/>
            <person name="Hoede C."/>
            <person name="Tenaillon O."/>
            <person name="Barbe V."/>
            <person name="Baeriswyl S."/>
            <person name="Bidet P."/>
            <person name="Bingen E."/>
            <person name="Bonacorsi S."/>
            <person name="Bouchier C."/>
            <person name="Bouvet O."/>
            <person name="Calteau A."/>
            <person name="Chiapello H."/>
            <person name="Clermont O."/>
            <person name="Cruveiller S."/>
            <person name="Danchin A."/>
            <person name="Diard M."/>
            <person name="Dossat C."/>
            <person name="Karoui M.E."/>
            <person name="Frapy E."/>
            <person name="Garry L."/>
            <person name="Ghigo J.M."/>
            <person name="Gilles A.M."/>
            <person name="Johnson J."/>
            <person name="Le Bouguenec C."/>
            <person name="Lescat M."/>
            <person name="Mangenot S."/>
            <person name="Martinez-Jehanne V."/>
            <person name="Matic I."/>
            <person name="Nassif X."/>
            <person name="Oztas S."/>
            <person name="Petit M.A."/>
            <person name="Pichon C."/>
            <person name="Rouy Z."/>
            <person name="Ruf C.S."/>
            <person name="Schneider D."/>
            <person name="Tourret J."/>
            <person name="Vacherie B."/>
            <person name="Vallenet D."/>
            <person name="Medigue C."/>
            <person name="Rocha E.P.C."/>
            <person name="Denamur E."/>
        </authorList>
    </citation>
    <scope>NUCLEOTIDE SEQUENCE [LARGE SCALE GENOMIC DNA]</scope>
    <source>
        <strain>ATCC 35469 / DSM 13698 / BCRC 15582 / CCUG 18766 / IAM 14443 / JCM 21226 / LMG 7866 / NBRC 102419 / NCTC 12128 / CDC 0568-73</strain>
    </source>
</reference>
<protein>
    <recommendedName>
        <fullName evidence="1">Ethanolamine ammonia-lyase small subunit</fullName>
        <shortName evidence="1">EAL small subunit</shortName>
        <ecNumber evidence="1">4.3.1.7</ecNumber>
    </recommendedName>
</protein>
<proteinExistence type="inferred from homology"/>
<evidence type="ECO:0000255" key="1">
    <source>
        <dbReference type="HAMAP-Rule" id="MF_00601"/>
    </source>
</evidence>
<keyword id="KW-1283">Bacterial microcompartment</keyword>
<keyword id="KW-0846">Cobalamin</keyword>
<keyword id="KW-0170">Cobalt</keyword>
<keyword id="KW-0456">Lyase</keyword>
<dbReference type="EC" id="4.3.1.7" evidence="1"/>
<dbReference type="EMBL" id="CU928158">
    <property type="protein sequence ID" value="CAQ88271.1"/>
    <property type="molecule type" value="Genomic_DNA"/>
</dbReference>
<dbReference type="RefSeq" id="WP_000372323.1">
    <property type="nucleotide sequence ID" value="NC_011740.1"/>
</dbReference>
<dbReference type="SMR" id="B7LKJ3"/>
<dbReference type="GeneID" id="75058212"/>
<dbReference type="KEGG" id="efe:EFER_0730"/>
<dbReference type="HOGENOM" id="CLU_068224_0_0_6"/>
<dbReference type="OrthoDB" id="114248at2"/>
<dbReference type="UniPathway" id="UPA00560"/>
<dbReference type="Proteomes" id="UP000000745">
    <property type="component" value="Chromosome"/>
</dbReference>
<dbReference type="GO" id="GO:0009350">
    <property type="term" value="C:ethanolamine ammonia-lyase complex"/>
    <property type="evidence" value="ECO:0007669"/>
    <property type="project" value="UniProtKB-UniRule"/>
</dbReference>
<dbReference type="GO" id="GO:0031471">
    <property type="term" value="C:ethanolamine degradation polyhedral organelle"/>
    <property type="evidence" value="ECO:0007669"/>
    <property type="project" value="UniProtKB-UniRule"/>
</dbReference>
<dbReference type="GO" id="GO:0031419">
    <property type="term" value="F:cobalamin binding"/>
    <property type="evidence" value="ECO:0007669"/>
    <property type="project" value="UniProtKB-UniRule"/>
</dbReference>
<dbReference type="GO" id="GO:0008851">
    <property type="term" value="F:ethanolamine ammonia-lyase activity"/>
    <property type="evidence" value="ECO:0007669"/>
    <property type="project" value="UniProtKB-UniRule"/>
</dbReference>
<dbReference type="GO" id="GO:0006520">
    <property type="term" value="P:amino acid metabolic process"/>
    <property type="evidence" value="ECO:0007669"/>
    <property type="project" value="InterPro"/>
</dbReference>
<dbReference type="GO" id="GO:0046336">
    <property type="term" value="P:ethanolamine catabolic process"/>
    <property type="evidence" value="ECO:0007669"/>
    <property type="project" value="UniProtKB-UniRule"/>
</dbReference>
<dbReference type="FunFam" id="3.40.50.11240:FF:000001">
    <property type="entry name" value="Ethanolamine ammonia-lyase light chain"/>
    <property type="match status" value="1"/>
</dbReference>
<dbReference type="Gene3D" id="6.10.140.690">
    <property type="match status" value="1"/>
</dbReference>
<dbReference type="Gene3D" id="6.10.250.2060">
    <property type="match status" value="1"/>
</dbReference>
<dbReference type="Gene3D" id="3.40.50.11240">
    <property type="entry name" value="Ethanolamine ammonia-lyase light chain (EutC)"/>
    <property type="match status" value="1"/>
</dbReference>
<dbReference type="HAMAP" id="MF_00601">
    <property type="entry name" value="EutC"/>
    <property type="match status" value="1"/>
</dbReference>
<dbReference type="InterPro" id="IPR009246">
    <property type="entry name" value="EutC"/>
</dbReference>
<dbReference type="InterPro" id="IPR042251">
    <property type="entry name" value="EutC_C"/>
</dbReference>
<dbReference type="NCBIfam" id="NF003971">
    <property type="entry name" value="PRK05465.1"/>
    <property type="match status" value="1"/>
</dbReference>
<dbReference type="PANTHER" id="PTHR39330">
    <property type="entry name" value="ETHANOLAMINE AMMONIA-LYASE LIGHT CHAIN"/>
    <property type="match status" value="1"/>
</dbReference>
<dbReference type="PANTHER" id="PTHR39330:SF1">
    <property type="entry name" value="ETHANOLAMINE AMMONIA-LYASE SMALL SUBUNIT"/>
    <property type="match status" value="1"/>
</dbReference>
<dbReference type="Pfam" id="PF05985">
    <property type="entry name" value="EutC"/>
    <property type="match status" value="1"/>
</dbReference>
<dbReference type="PIRSF" id="PIRSF018982">
    <property type="entry name" value="EutC"/>
    <property type="match status" value="1"/>
</dbReference>
<comment type="function">
    <text evidence="1">Catalyzes the deamination of various vicinal amino-alcohols to oxo compounds. Allows this organism to utilize ethanolamine as the sole source of nitrogen and carbon in the presence of external vitamin B12.</text>
</comment>
<comment type="catalytic activity">
    <reaction evidence="1">
        <text>ethanolamine = acetaldehyde + NH4(+)</text>
        <dbReference type="Rhea" id="RHEA:15313"/>
        <dbReference type="ChEBI" id="CHEBI:15343"/>
        <dbReference type="ChEBI" id="CHEBI:28938"/>
        <dbReference type="ChEBI" id="CHEBI:57603"/>
        <dbReference type="EC" id="4.3.1.7"/>
    </reaction>
</comment>
<comment type="cofactor">
    <cofactor evidence="1">
        <name>adenosylcob(III)alamin</name>
        <dbReference type="ChEBI" id="CHEBI:18408"/>
    </cofactor>
    <text evidence="1">Binds between the large and small subunits.</text>
</comment>
<comment type="pathway">
    <text evidence="1">Amine and polyamine degradation; ethanolamine degradation.</text>
</comment>
<comment type="subunit">
    <text evidence="1">The basic unit is a heterodimer which dimerizes to form tetramers. The heterotetramers trimerize; 6 large subunits form a core ring with 6 small subunits projecting outwards.</text>
</comment>
<comment type="subcellular location">
    <subcellularLocation>
        <location evidence="1">Bacterial microcompartment</location>
    </subcellularLocation>
</comment>
<comment type="similarity">
    <text evidence="1">Belongs to the EutC family.</text>
</comment>
<name>EUTC_ESCF3</name>